<comment type="function">
    <text evidence="1">This protein is located at the 30S-50S ribosomal subunit interface and may play a role in the structure and function of the aminoacyl-tRNA binding site.</text>
</comment>
<comment type="similarity">
    <text evidence="1">Belongs to the bacterial ribosomal protein bL19 family.</text>
</comment>
<proteinExistence type="inferred from homology"/>
<gene>
    <name evidence="1" type="primary">rplS</name>
    <name type="ordered locus">cgR_1925</name>
</gene>
<protein>
    <recommendedName>
        <fullName evidence="1">Large ribosomal subunit protein bL19</fullName>
    </recommendedName>
    <alternativeName>
        <fullName evidence="2">50S ribosomal protein L19</fullName>
    </alternativeName>
</protein>
<name>RL19_CORGB</name>
<evidence type="ECO:0000255" key="1">
    <source>
        <dbReference type="HAMAP-Rule" id="MF_00402"/>
    </source>
</evidence>
<evidence type="ECO:0000305" key="2"/>
<organism>
    <name type="scientific">Corynebacterium glutamicum (strain R)</name>
    <dbReference type="NCBI Taxonomy" id="340322"/>
    <lineage>
        <taxon>Bacteria</taxon>
        <taxon>Bacillati</taxon>
        <taxon>Actinomycetota</taxon>
        <taxon>Actinomycetes</taxon>
        <taxon>Mycobacteriales</taxon>
        <taxon>Corynebacteriaceae</taxon>
        <taxon>Corynebacterium</taxon>
    </lineage>
</organism>
<feature type="chain" id="PRO_1000049667" description="Large ribosomal subunit protein bL19">
    <location>
        <begin position="1"/>
        <end position="113"/>
    </location>
</feature>
<dbReference type="EMBL" id="AP009044">
    <property type="protein sequence ID" value="BAF54920.1"/>
    <property type="molecule type" value="Genomic_DNA"/>
</dbReference>
<dbReference type="RefSeq" id="WP_003857579.1">
    <property type="nucleotide sequence ID" value="NC_009342.1"/>
</dbReference>
<dbReference type="SMR" id="A4QFA4"/>
<dbReference type="KEGG" id="cgt:cgR_1925"/>
<dbReference type="HOGENOM" id="CLU_103507_2_1_11"/>
<dbReference type="PhylomeDB" id="A4QFA4"/>
<dbReference type="Proteomes" id="UP000006698">
    <property type="component" value="Chromosome"/>
</dbReference>
<dbReference type="GO" id="GO:0022625">
    <property type="term" value="C:cytosolic large ribosomal subunit"/>
    <property type="evidence" value="ECO:0007669"/>
    <property type="project" value="TreeGrafter"/>
</dbReference>
<dbReference type="GO" id="GO:0003735">
    <property type="term" value="F:structural constituent of ribosome"/>
    <property type="evidence" value="ECO:0007669"/>
    <property type="project" value="InterPro"/>
</dbReference>
<dbReference type="GO" id="GO:0006412">
    <property type="term" value="P:translation"/>
    <property type="evidence" value="ECO:0007669"/>
    <property type="project" value="UniProtKB-UniRule"/>
</dbReference>
<dbReference type="FunFam" id="2.30.30.790:FF:000001">
    <property type="entry name" value="50S ribosomal protein L19"/>
    <property type="match status" value="1"/>
</dbReference>
<dbReference type="Gene3D" id="2.30.30.790">
    <property type="match status" value="1"/>
</dbReference>
<dbReference type="HAMAP" id="MF_00402">
    <property type="entry name" value="Ribosomal_bL19"/>
    <property type="match status" value="1"/>
</dbReference>
<dbReference type="InterPro" id="IPR001857">
    <property type="entry name" value="Ribosomal_bL19"/>
</dbReference>
<dbReference type="InterPro" id="IPR018257">
    <property type="entry name" value="Ribosomal_bL19_CS"/>
</dbReference>
<dbReference type="InterPro" id="IPR038657">
    <property type="entry name" value="Ribosomal_bL19_sf"/>
</dbReference>
<dbReference type="InterPro" id="IPR008991">
    <property type="entry name" value="Translation_prot_SH3-like_sf"/>
</dbReference>
<dbReference type="NCBIfam" id="TIGR01024">
    <property type="entry name" value="rplS_bact"/>
    <property type="match status" value="1"/>
</dbReference>
<dbReference type="PANTHER" id="PTHR15680:SF9">
    <property type="entry name" value="LARGE RIBOSOMAL SUBUNIT PROTEIN BL19M"/>
    <property type="match status" value="1"/>
</dbReference>
<dbReference type="PANTHER" id="PTHR15680">
    <property type="entry name" value="RIBOSOMAL PROTEIN L19"/>
    <property type="match status" value="1"/>
</dbReference>
<dbReference type="Pfam" id="PF01245">
    <property type="entry name" value="Ribosomal_L19"/>
    <property type="match status" value="1"/>
</dbReference>
<dbReference type="PIRSF" id="PIRSF002191">
    <property type="entry name" value="Ribosomal_L19"/>
    <property type="match status" value="1"/>
</dbReference>
<dbReference type="PRINTS" id="PR00061">
    <property type="entry name" value="RIBOSOMALL19"/>
</dbReference>
<dbReference type="SUPFAM" id="SSF50104">
    <property type="entry name" value="Translation proteins SH3-like domain"/>
    <property type="match status" value="1"/>
</dbReference>
<dbReference type="PROSITE" id="PS01015">
    <property type="entry name" value="RIBOSOMAL_L19"/>
    <property type="match status" value="1"/>
</dbReference>
<keyword id="KW-0687">Ribonucleoprotein</keyword>
<keyword id="KW-0689">Ribosomal protein</keyword>
<reference key="1">
    <citation type="journal article" date="2007" name="Microbiology">
        <title>Comparative analysis of the Corynebacterium glutamicum group and complete genome sequence of strain R.</title>
        <authorList>
            <person name="Yukawa H."/>
            <person name="Omumasaba C.A."/>
            <person name="Nonaka H."/>
            <person name="Kos P."/>
            <person name="Okai N."/>
            <person name="Suzuki N."/>
            <person name="Suda M."/>
            <person name="Tsuge Y."/>
            <person name="Watanabe J."/>
            <person name="Ikeda Y."/>
            <person name="Vertes A.A."/>
            <person name="Inui M."/>
        </authorList>
    </citation>
    <scope>NUCLEOTIDE SEQUENCE [LARGE SCALE GENOMIC DNA]</scope>
    <source>
        <strain>R</strain>
    </source>
</reference>
<sequence length="113" mass="12861">MNILDKIDAASLRDDVPAFRAGDTLDVHVKVIEGTTTRTQLFKGVVIRRQGGGIRETFTVRKVSFGIGVERTFPVHSPNIEKIEVVRRGDVRRAKLYYLRELRGKAARIKEKR</sequence>
<accession>A4QFA4</accession>